<sequence>MAVKIEQALGEKRSLNDNDEVPRKKRYNFRKKVELDYSALNEGEDKKSKFFHPHIALFEKEFEKCLSNVTEDMSMTCSEYCKRFDDIDFPLKISDPENSGMVVSTNNKTTRDLTVDDITQAVGDDYFVNVMDVQSQENERWSLREWCNYFNKPAEEKDRIRNVISLEVSHVEDLQYDRPDIVDDKDLVDIVWNNVENLDTENDPRPKVTKYCLMSVKNAFTDYHLDFAGTSVYYNLAFGKKKFILYPPTPENIENYIEWSTSTYQNMLFLGEKLTGGVAMELNGGDLFMIPSGYIHVVYTPEDSLIFGGNYLTFRDISQQLKIVDVEKQTGVTKRYTFPMFDEVMGRTCEWLCQNQKKGKQMQVKKETVNDLISYMKSGKTKYKPTNFINKKQMLQELSNLYL</sequence>
<evidence type="ECO:0000250" key="1"/>
<evidence type="ECO:0000250" key="2">
    <source>
        <dbReference type="UniProtKB" id="P40034"/>
    </source>
</evidence>
<evidence type="ECO:0000255" key="3">
    <source>
        <dbReference type="PROSITE-ProRule" id="PRU00538"/>
    </source>
</evidence>
<evidence type="ECO:0000305" key="4"/>
<accession>Q6FPL6</accession>
<feature type="chain" id="PRO_0000226794" description="JmjC domain-containing histone demethylation protein 1">
    <location>
        <begin position="1"/>
        <end position="403"/>
    </location>
</feature>
<feature type="domain" description="JmjC" evidence="3">
    <location>
        <begin position="141"/>
        <end position="328"/>
    </location>
</feature>
<feature type="binding site" evidence="1">
    <location>
        <position position="221"/>
    </location>
    <ligand>
        <name>substrate</name>
    </ligand>
</feature>
<feature type="binding site" evidence="3">
    <location>
        <position position="224"/>
    </location>
    <ligand>
        <name>Fe cation</name>
        <dbReference type="ChEBI" id="CHEBI:24875"/>
        <note>catalytic</note>
    </ligand>
</feature>
<feature type="binding site" evidence="3">
    <location>
        <position position="226"/>
    </location>
    <ligand>
        <name>Fe cation</name>
        <dbReference type="ChEBI" id="CHEBI:24875"/>
        <note>catalytic</note>
    </ligand>
</feature>
<feature type="binding site" evidence="1">
    <location>
        <position position="241"/>
    </location>
    <ligand>
        <name>substrate</name>
    </ligand>
</feature>
<feature type="binding site" evidence="3">
    <location>
        <position position="296"/>
    </location>
    <ligand>
        <name>Fe cation</name>
        <dbReference type="ChEBI" id="CHEBI:24875"/>
        <note>catalytic</note>
    </ligand>
</feature>
<gene>
    <name type="primary">JHD1</name>
    <name type="ordered locus">CAGL0J02860g</name>
</gene>
<protein>
    <recommendedName>
        <fullName>JmjC domain-containing histone demethylation protein 1</fullName>
        <ecNumber evidence="2">1.14.11.27</ecNumber>
    </recommendedName>
    <alternativeName>
        <fullName>[Histone-H3]-lysine-36 demethylase 1</fullName>
    </alternativeName>
</protein>
<organism>
    <name type="scientific">Candida glabrata (strain ATCC 2001 / BCRC 20586 / JCM 3761 / NBRC 0622 / NRRL Y-65 / CBS 138)</name>
    <name type="common">Yeast</name>
    <name type="synonym">Nakaseomyces glabratus</name>
    <dbReference type="NCBI Taxonomy" id="284593"/>
    <lineage>
        <taxon>Eukaryota</taxon>
        <taxon>Fungi</taxon>
        <taxon>Dikarya</taxon>
        <taxon>Ascomycota</taxon>
        <taxon>Saccharomycotina</taxon>
        <taxon>Saccharomycetes</taxon>
        <taxon>Saccharomycetales</taxon>
        <taxon>Saccharomycetaceae</taxon>
        <taxon>Nakaseomyces</taxon>
    </lineage>
</organism>
<keyword id="KW-0156">Chromatin regulator</keyword>
<keyword id="KW-0223">Dioxygenase</keyword>
<keyword id="KW-0408">Iron</keyword>
<keyword id="KW-0479">Metal-binding</keyword>
<keyword id="KW-0539">Nucleus</keyword>
<keyword id="KW-0560">Oxidoreductase</keyword>
<keyword id="KW-1185">Reference proteome</keyword>
<keyword id="KW-0804">Transcription</keyword>
<keyword id="KW-0805">Transcription regulation</keyword>
<comment type="function">
    <text evidence="2">Histone demethylase that specifically demethylates 'Lys-36' of histone H3, thereby playing a central role in histone code.</text>
</comment>
<comment type="catalytic activity">
    <reaction evidence="2">
        <text>N(6),N(6)-dimethyl-L-lysyl(36)-[histone H3] + 2 2-oxoglutarate + 2 O2 = L-lysyl(36)-[histone H3] + 2 formaldehyde + 2 succinate + 2 CO2</text>
        <dbReference type="Rhea" id="RHEA:42032"/>
        <dbReference type="Rhea" id="RHEA-COMP:9785"/>
        <dbReference type="Rhea" id="RHEA-COMP:9787"/>
        <dbReference type="ChEBI" id="CHEBI:15379"/>
        <dbReference type="ChEBI" id="CHEBI:16526"/>
        <dbReference type="ChEBI" id="CHEBI:16810"/>
        <dbReference type="ChEBI" id="CHEBI:16842"/>
        <dbReference type="ChEBI" id="CHEBI:29969"/>
        <dbReference type="ChEBI" id="CHEBI:30031"/>
        <dbReference type="ChEBI" id="CHEBI:61976"/>
        <dbReference type="EC" id="1.14.11.27"/>
    </reaction>
</comment>
<comment type="cofactor">
    <cofactor evidence="1">
        <name>Fe(2+)</name>
        <dbReference type="ChEBI" id="CHEBI:29033"/>
    </cofactor>
    <text evidence="1">Binds 1 Fe(2+) ion per subunit.</text>
</comment>
<comment type="subcellular location">
    <subcellularLocation>
        <location evidence="1">Nucleus</location>
    </subcellularLocation>
</comment>
<comment type="domain">
    <text evidence="1">The JmjC domain mediates the demethylation activity.</text>
</comment>
<comment type="similarity">
    <text evidence="4">Belongs to the JHDM1 histone demethylase family.</text>
</comment>
<reference key="1">
    <citation type="journal article" date="2004" name="Nature">
        <title>Genome evolution in yeasts.</title>
        <authorList>
            <person name="Dujon B."/>
            <person name="Sherman D."/>
            <person name="Fischer G."/>
            <person name="Durrens P."/>
            <person name="Casaregola S."/>
            <person name="Lafontaine I."/>
            <person name="de Montigny J."/>
            <person name="Marck C."/>
            <person name="Neuveglise C."/>
            <person name="Talla E."/>
            <person name="Goffard N."/>
            <person name="Frangeul L."/>
            <person name="Aigle M."/>
            <person name="Anthouard V."/>
            <person name="Babour A."/>
            <person name="Barbe V."/>
            <person name="Barnay S."/>
            <person name="Blanchin S."/>
            <person name="Beckerich J.-M."/>
            <person name="Beyne E."/>
            <person name="Bleykasten C."/>
            <person name="Boisrame A."/>
            <person name="Boyer J."/>
            <person name="Cattolico L."/>
            <person name="Confanioleri F."/>
            <person name="de Daruvar A."/>
            <person name="Despons L."/>
            <person name="Fabre E."/>
            <person name="Fairhead C."/>
            <person name="Ferry-Dumazet H."/>
            <person name="Groppi A."/>
            <person name="Hantraye F."/>
            <person name="Hennequin C."/>
            <person name="Jauniaux N."/>
            <person name="Joyet P."/>
            <person name="Kachouri R."/>
            <person name="Kerrest A."/>
            <person name="Koszul R."/>
            <person name="Lemaire M."/>
            <person name="Lesur I."/>
            <person name="Ma L."/>
            <person name="Muller H."/>
            <person name="Nicaud J.-M."/>
            <person name="Nikolski M."/>
            <person name="Oztas S."/>
            <person name="Ozier-Kalogeropoulos O."/>
            <person name="Pellenz S."/>
            <person name="Potier S."/>
            <person name="Richard G.-F."/>
            <person name="Straub M.-L."/>
            <person name="Suleau A."/>
            <person name="Swennen D."/>
            <person name="Tekaia F."/>
            <person name="Wesolowski-Louvel M."/>
            <person name="Westhof E."/>
            <person name="Wirth B."/>
            <person name="Zeniou-Meyer M."/>
            <person name="Zivanovic Y."/>
            <person name="Bolotin-Fukuhara M."/>
            <person name="Thierry A."/>
            <person name="Bouchier C."/>
            <person name="Caudron B."/>
            <person name="Scarpelli C."/>
            <person name="Gaillardin C."/>
            <person name="Weissenbach J."/>
            <person name="Wincker P."/>
            <person name="Souciet J.-L."/>
        </authorList>
    </citation>
    <scope>NUCLEOTIDE SEQUENCE [LARGE SCALE GENOMIC DNA]</scope>
    <source>
        <strain>ATCC 2001 / BCRC 20586 / JCM 3761 / NBRC 0622 / NRRL Y-65 / CBS 138</strain>
    </source>
</reference>
<proteinExistence type="inferred from homology"/>
<name>JHD1_CANGA</name>
<dbReference type="EC" id="1.14.11.27" evidence="2"/>
<dbReference type="EMBL" id="CR380956">
    <property type="protein sequence ID" value="CAG60777.1"/>
    <property type="molecule type" value="Genomic_DNA"/>
</dbReference>
<dbReference type="RefSeq" id="XP_447828.1">
    <property type="nucleotide sequence ID" value="XM_447828.1"/>
</dbReference>
<dbReference type="SMR" id="Q6FPL6"/>
<dbReference type="FunCoup" id="Q6FPL6">
    <property type="interactions" value="18"/>
</dbReference>
<dbReference type="STRING" id="284593.Q6FPL6"/>
<dbReference type="EnsemblFungi" id="CAGL0J02860g-T">
    <property type="protein sequence ID" value="CAGL0J02860g-T-p1"/>
    <property type="gene ID" value="CAGL0J02860g"/>
</dbReference>
<dbReference type="KEGG" id="cgr:2889738"/>
<dbReference type="CGD" id="CAL0133058">
    <property type="gene designation" value="CAGL0J02860g"/>
</dbReference>
<dbReference type="VEuPathDB" id="FungiDB:B1J91_J02860g"/>
<dbReference type="VEuPathDB" id="FungiDB:CAGL0J02860g"/>
<dbReference type="eggNOG" id="KOG1633">
    <property type="taxonomic scope" value="Eukaryota"/>
</dbReference>
<dbReference type="HOGENOM" id="CLU_003540_6_2_1"/>
<dbReference type="InParanoid" id="Q6FPL6"/>
<dbReference type="OMA" id="SQQNERW"/>
<dbReference type="Proteomes" id="UP000002428">
    <property type="component" value="Chromosome J"/>
</dbReference>
<dbReference type="GO" id="GO:0005634">
    <property type="term" value="C:nucleus"/>
    <property type="evidence" value="ECO:0007669"/>
    <property type="project" value="UniProtKB-SubCell"/>
</dbReference>
<dbReference type="GO" id="GO:0140680">
    <property type="term" value="F:histone H3K36me/H3K36me2 demethylase activity"/>
    <property type="evidence" value="ECO:0007669"/>
    <property type="project" value="UniProtKB-EC"/>
</dbReference>
<dbReference type="GO" id="GO:0046872">
    <property type="term" value="F:metal ion binding"/>
    <property type="evidence" value="ECO:0007669"/>
    <property type="project" value="UniProtKB-KW"/>
</dbReference>
<dbReference type="GO" id="GO:0035064">
    <property type="term" value="F:methylated histone binding"/>
    <property type="evidence" value="ECO:0007669"/>
    <property type="project" value="EnsemblFungi"/>
</dbReference>
<dbReference type="GO" id="GO:0032968">
    <property type="term" value="P:positive regulation of transcription elongation by RNA polymerase II"/>
    <property type="evidence" value="ECO:0007669"/>
    <property type="project" value="EnsemblFungi"/>
</dbReference>
<dbReference type="Gene3D" id="2.60.120.650">
    <property type="entry name" value="Cupin"/>
    <property type="match status" value="1"/>
</dbReference>
<dbReference type="InterPro" id="IPR050690">
    <property type="entry name" value="JHDM1_Histone_Demethylase"/>
</dbReference>
<dbReference type="InterPro" id="IPR003347">
    <property type="entry name" value="JmjC_dom"/>
</dbReference>
<dbReference type="PANTHER" id="PTHR23123">
    <property type="entry name" value="PHD/F-BOX CONTAINING PROTEIN"/>
    <property type="match status" value="1"/>
</dbReference>
<dbReference type="SMART" id="SM00558">
    <property type="entry name" value="JmjC"/>
    <property type="match status" value="1"/>
</dbReference>
<dbReference type="SUPFAM" id="SSF51197">
    <property type="entry name" value="Clavaminate synthase-like"/>
    <property type="match status" value="1"/>
</dbReference>
<dbReference type="PROSITE" id="PS51184">
    <property type="entry name" value="JMJC"/>
    <property type="match status" value="1"/>
</dbReference>